<dbReference type="EMBL" id="AJ312202">
    <property type="protein sequence ID" value="CAC85462.1"/>
    <property type="molecule type" value="mRNA"/>
</dbReference>
<dbReference type="EMBL" id="AC004238">
    <property type="status" value="NOT_ANNOTATED_CDS"/>
    <property type="molecule type" value="Genomic_DNA"/>
</dbReference>
<dbReference type="EMBL" id="CP002685">
    <property type="protein sequence ID" value="AEC09052.1"/>
    <property type="molecule type" value="Genomic_DNA"/>
</dbReference>
<dbReference type="RefSeq" id="NP_850239.1">
    <molecule id="Q7Y0S0-1"/>
    <property type="nucleotide sequence ID" value="NM_179908.3"/>
</dbReference>
<dbReference type="SMR" id="Q7Y0S0"/>
<dbReference type="ComplexPortal" id="CPX-1296">
    <property type="entry name" value="Urease activation complex"/>
</dbReference>
<dbReference type="FunCoup" id="Q7Y0S0">
    <property type="interactions" value="103"/>
</dbReference>
<dbReference type="STRING" id="3702.Q7Y0S0"/>
<dbReference type="PaxDb" id="3702-AT2G35035.1"/>
<dbReference type="ProteomicsDB" id="228719">
    <molecule id="Q7Y0S0-1"/>
</dbReference>
<dbReference type="EnsemblPlants" id="AT2G35035.1">
    <molecule id="Q7Y0S0-1"/>
    <property type="protein sequence ID" value="AT2G35035.1"/>
    <property type="gene ID" value="AT2G35035"/>
</dbReference>
<dbReference type="GeneID" id="818068"/>
<dbReference type="Gramene" id="AT2G35035.1">
    <molecule id="Q7Y0S0-1"/>
    <property type="protein sequence ID" value="AT2G35035.1"/>
    <property type="gene ID" value="AT2G35035"/>
</dbReference>
<dbReference type="KEGG" id="ath:AT2G35035"/>
<dbReference type="Araport" id="AT2G35035"/>
<dbReference type="TAIR" id="AT2G35035">
    <property type="gene designation" value="URED"/>
</dbReference>
<dbReference type="eggNOG" id="ENOG502QSQN">
    <property type="taxonomic scope" value="Eukaryota"/>
</dbReference>
<dbReference type="HOGENOM" id="CLU_021703_0_0_1"/>
<dbReference type="InParanoid" id="Q7Y0S0"/>
<dbReference type="OMA" id="CFRSASY"/>
<dbReference type="PhylomeDB" id="Q7Y0S0"/>
<dbReference type="PRO" id="PR:Q7Y0S0"/>
<dbReference type="Proteomes" id="UP000006548">
    <property type="component" value="Chromosome 2"/>
</dbReference>
<dbReference type="ExpressionAtlas" id="Q7Y0S0">
    <property type="expression patterns" value="baseline and differential"/>
</dbReference>
<dbReference type="GO" id="GO:0150006">
    <property type="term" value="C:urease activator complex"/>
    <property type="evidence" value="ECO:0000353"/>
    <property type="project" value="ComplexPortal"/>
</dbReference>
<dbReference type="GO" id="GO:0016151">
    <property type="term" value="F:nickel cation binding"/>
    <property type="evidence" value="ECO:0007669"/>
    <property type="project" value="InterPro"/>
</dbReference>
<dbReference type="GO" id="GO:0051604">
    <property type="term" value="P:protein maturation"/>
    <property type="evidence" value="ECO:0000315"/>
    <property type="project" value="UniProtKB"/>
</dbReference>
<dbReference type="GO" id="GO:0043419">
    <property type="term" value="P:urea catabolic process"/>
    <property type="evidence" value="ECO:0000314"/>
    <property type="project" value="ComplexPortal"/>
</dbReference>
<dbReference type="HAMAP" id="MF_01384">
    <property type="entry name" value="UreD"/>
    <property type="match status" value="1"/>
</dbReference>
<dbReference type="InterPro" id="IPR002669">
    <property type="entry name" value="UreD"/>
</dbReference>
<dbReference type="PANTHER" id="PTHR33643">
    <property type="entry name" value="UREASE ACCESSORY PROTEIN D"/>
    <property type="match status" value="1"/>
</dbReference>
<dbReference type="PANTHER" id="PTHR33643:SF1">
    <property type="entry name" value="UREASE ACCESSORY PROTEIN D"/>
    <property type="match status" value="1"/>
</dbReference>
<dbReference type="Pfam" id="PF01774">
    <property type="entry name" value="UreD"/>
    <property type="match status" value="1"/>
</dbReference>
<proteinExistence type="evidence at transcript level"/>
<keyword id="KW-0025">Alternative splicing</keyword>
<keyword id="KW-0143">Chaperone</keyword>
<keyword id="KW-0996">Nickel insertion</keyword>
<keyword id="KW-1185">Reference proteome</keyword>
<gene>
    <name type="primary">URED</name>
    <name type="ordered locus">At2g35035</name>
    <name type="ORF">F19I3</name>
</gene>
<feature type="chain" id="PRO_0000424249" description="Urease accessory protein D">
    <location>
        <begin position="1"/>
        <end position="294"/>
    </location>
</feature>
<organism>
    <name type="scientific">Arabidopsis thaliana</name>
    <name type="common">Mouse-ear cress</name>
    <dbReference type="NCBI Taxonomy" id="3702"/>
    <lineage>
        <taxon>Eukaryota</taxon>
        <taxon>Viridiplantae</taxon>
        <taxon>Streptophyta</taxon>
        <taxon>Embryophyta</taxon>
        <taxon>Tracheophyta</taxon>
        <taxon>Spermatophyta</taxon>
        <taxon>Magnoliopsida</taxon>
        <taxon>eudicotyledons</taxon>
        <taxon>Gunneridae</taxon>
        <taxon>Pentapetalae</taxon>
        <taxon>rosids</taxon>
        <taxon>malvids</taxon>
        <taxon>Brassicales</taxon>
        <taxon>Brassicaceae</taxon>
        <taxon>Camelineae</taxon>
        <taxon>Arabidopsis</taxon>
    </lineage>
</organism>
<comment type="function">
    <text evidence="2">Required for the maturation and activation of urease via the functional incorporation of the urease nickel metallocenter.</text>
</comment>
<comment type="subunit">
    <text evidence="1">URED, UREF and UREG may form a complex that acts as a GTP-hydrolysis-dependent molecular chaperone, activating the urease apoprotein.</text>
</comment>
<comment type="alternative products">
    <event type="alternative splicing"/>
    <isoform>
        <id>Q7Y0S0-1</id>
        <name>1</name>
        <sequence type="displayed"/>
    </isoform>
    <text>A number of isoforms are produced. According to EST sequences.</text>
</comment>
<comment type="disruption phenotype">
    <text evidence="2">No visible phenotype under normal growth conditions, but mutant plants cannot grow on medium with urea as the sole source of nitrogen.</text>
</comment>
<comment type="similarity">
    <text evidence="3">Belongs to the UreD family.</text>
</comment>
<protein>
    <recommendedName>
        <fullName>Urease accessory protein D</fullName>
        <shortName>AtURED</shortName>
    </recommendedName>
</protein>
<name>URED_ARATH</name>
<sequence>MATGKVVVEKVGGRSTATSCFSKYPLKFLLPSKAAPAGTDVVWIYSITYGGGIVSGDSISCEFTIGDGCTAVITTQSSTKVYKAIGSKCSEQILEARIGSEALLVVIPDPVTCFSTARYYQKQIFRLLSDSNLVLVDWITSGRHANGEKWDFEFYKSINNVYLEDDHPLFLDTVLLEKRSIQSIAERMQDYQAIAMVILFGAKLKEIQKQVQENVKNMMSEQLQLSYSSRRHKSESSSRNRFMKPEFIASCSTFGPEGKGVVVRIASDSTESVYNFLRQQLAELEPVLGQAPYA</sequence>
<reference key="1">
    <citation type="journal article" date="2005" name="Plant Physiol.">
        <title>Identification of three urease accessory proteins that are required for urease activation in Arabidopsis.</title>
        <authorList>
            <person name="Witte C.P."/>
            <person name="Rosso M.G."/>
            <person name="Romeis T."/>
        </authorList>
    </citation>
    <scope>NUCLEOTIDE SEQUENCE [MRNA]</scope>
    <scope>FUNCTION</scope>
    <scope>DISRUPTION PHENOTYPE</scope>
    <source>
        <strain>cv. Columbia</strain>
    </source>
</reference>
<reference key="2">
    <citation type="journal article" date="1999" name="Nature">
        <title>Sequence and analysis of chromosome 2 of the plant Arabidopsis thaliana.</title>
        <authorList>
            <person name="Lin X."/>
            <person name="Kaul S."/>
            <person name="Rounsley S.D."/>
            <person name="Shea T.P."/>
            <person name="Benito M.-I."/>
            <person name="Town C.D."/>
            <person name="Fujii C.Y."/>
            <person name="Mason T.M."/>
            <person name="Bowman C.L."/>
            <person name="Barnstead M.E."/>
            <person name="Feldblyum T.V."/>
            <person name="Buell C.R."/>
            <person name="Ketchum K.A."/>
            <person name="Lee J.J."/>
            <person name="Ronning C.M."/>
            <person name="Koo H.L."/>
            <person name="Moffat K.S."/>
            <person name="Cronin L.A."/>
            <person name="Shen M."/>
            <person name="Pai G."/>
            <person name="Van Aken S."/>
            <person name="Umayam L."/>
            <person name="Tallon L.J."/>
            <person name="Gill J.E."/>
            <person name="Adams M.D."/>
            <person name="Carrera A.J."/>
            <person name="Creasy T.H."/>
            <person name="Goodman H.M."/>
            <person name="Somerville C.R."/>
            <person name="Copenhaver G.P."/>
            <person name="Preuss D."/>
            <person name="Nierman W.C."/>
            <person name="White O."/>
            <person name="Eisen J.A."/>
            <person name="Salzberg S.L."/>
            <person name="Fraser C.M."/>
            <person name="Venter J.C."/>
        </authorList>
    </citation>
    <scope>NUCLEOTIDE SEQUENCE [LARGE SCALE GENOMIC DNA]</scope>
    <source>
        <strain>cv. Columbia</strain>
    </source>
</reference>
<reference key="3">
    <citation type="journal article" date="2017" name="Plant J.">
        <title>Araport11: a complete reannotation of the Arabidopsis thaliana reference genome.</title>
        <authorList>
            <person name="Cheng C.Y."/>
            <person name="Krishnakumar V."/>
            <person name="Chan A.P."/>
            <person name="Thibaud-Nissen F."/>
            <person name="Schobel S."/>
            <person name="Town C.D."/>
        </authorList>
    </citation>
    <scope>GENOME REANNOTATION</scope>
    <source>
        <strain>cv. Columbia</strain>
    </source>
</reference>
<accession>Q7Y0S0</accession>
<evidence type="ECO:0000250" key="1"/>
<evidence type="ECO:0000269" key="2">
    <source>
    </source>
</evidence>
<evidence type="ECO:0000305" key="3"/>